<organism>
    <name type="scientific">Homo sapiens</name>
    <name type="common">Human</name>
    <dbReference type="NCBI Taxonomy" id="9606"/>
    <lineage>
        <taxon>Eukaryota</taxon>
        <taxon>Metazoa</taxon>
        <taxon>Chordata</taxon>
        <taxon>Craniata</taxon>
        <taxon>Vertebrata</taxon>
        <taxon>Euteleostomi</taxon>
        <taxon>Mammalia</taxon>
        <taxon>Eutheria</taxon>
        <taxon>Euarchontoglires</taxon>
        <taxon>Primates</taxon>
        <taxon>Haplorrhini</taxon>
        <taxon>Catarrhini</taxon>
        <taxon>Hominidae</taxon>
        <taxon>Homo</taxon>
    </lineage>
</organism>
<name>TTY10_HUMAN</name>
<dbReference type="EMBL" id="AF332239">
    <property type="protein sequence ID" value="AAK13489.1"/>
    <property type="molecule type" value="mRNA"/>
</dbReference>
<dbReference type="BioMuta" id="HGNC:18491"/>
<dbReference type="AGR" id="HGNC:18491"/>
<dbReference type="GeneCards" id="TTTY10"/>
<dbReference type="HGNC" id="HGNC:18491">
    <property type="gene designation" value="TTTY10"/>
</dbReference>
<dbReference type="neXtProt" id="NX_Q9BZA0"/>
<dbReference type="InParanoid" id="Q9BZA0"/>
<dbReference type="PAN-GO" id="Q9BZA0">
    <property type="GO annotations" value="0 GO annotations based on evolutionary models"/>
</dbReference>
<dbReference type="Pharos" id="Q9BZA0">
    <property type="development level" value="Tdark"/>
</dbReference>
<dbReference type="Proteomes" id="UP000005640">
    <property type="component" value="Unplaced"/>
</dbReference>
<dbReference type="RNAct" id="Q9BZA0">
    <property type="molecule type" value="protein"/>
</dbReference>
<sequence>MKLQTLMDWEEAHEKNRKNKRKAEALVAALQTCRVQDPPGTSTDCYLLPVLKPGHFKKNCPSHKKKPP</sequence>
<comment type="caution">
    <text evidence="1">Could be the product of a pseudogene.</text>
</comment>
<proteinExistence type="uncertain"/>
<reference key="1">
    <citation type="journal article" date="2003" name="Nature">
        <title>The male-specific region of the human Y chromosome is a mosaic of discrete sequence classes.</title>
        <authorList>
            <person name="Skaletsky H."/>
            <person name="Kuroda-Kawaguchi T."/>
            <person name="Minx P.J."/>
            <person name="Cordum H.S."/>
            <person name="Hillier L.W."/>
            <person name="Brown L.G."/>
            <person name="Repping S."/>
            <person name="Pyntikova T."/>
            <person name="Ali J."/>
            <person name="Bieri T."/>
            <person name="Chinwalla A."/>
            <person name="Delehaunty A."/>
            <person name="Delehaunty K."/>
            <person name="Du H."/>
            <person name="Fewell G."/>
            <person name="Fulton L."/>
            <person name="Fulton R."/>
            <person name="Graves T.A."/>
            <person name="Hou S.-F."/>
            <person name="Latrielle P."/>
            <person name="Leonard S."/>
            <person name="Mardis E."/>
            <person name="Maupin R."/>
            <person name="McPherson J."/>
            <person name="Miner T."/>
            <person name="Nash W."/>
            <person name="Nguyen C."/>
            <person name="Ozersky P."/>
            <person name="Pepin K."/>
            <person name="Rock S."/>
            <person name="Rohlfing T."/>
            <person name="Scott K."/>
            <person name="Schultz B."/>
            <person name="Strong C."/>
            <person name="Tin-Wollam A."/>
            <person name="Yang S.-P."/>
            <person name="Waterston R.H."/>
            <person name="Wilson R.K."/>
            <person name="Rozen S."/>
            <person name="Page D.C."/>
        </authorList>
    </citation>
    <scope>NUCLEOTIDE SEQUENCE [MRNA]</scope>
    <source>
        <tissue>Testis</tissue>
    </source>
</reference>
<keyword id="KW-1185">Reference proteome</keyword>
<accession>Q9BZA0</accession>
<protein>
    <recommendedName>
        <fullName>Putative transcript Y 10 protein</fullName>
    </recommendedName>
</protein>
<gene>
    <name type="primary">TTTY10</name>
    <name type="synonym">TTY10</name>
</gene>
<evidence type="ECO:0000305" key="1"/>
<feature type="chain" id="PRO_0000065683" description="Putative transcript Y 10 protein">
    <location>
        <begin position="1"/>
        <end position="68"/>
    </location>
</feature>